<keyword id="KW-0238">DNA-binding</keyword>
<keyword id="KW-0479">Metal-binding</keyword>
<keyword id="KW-0539">Nucleus</keyword>
<keyword id="KW-0597">Phosphoprotein</keyword>
<keyword id="KW-1185">Reference proteome</keyword>
<keyword id="KW-0677">Repeat</keyword>
<keyword id="KW-0804">Transcription</keyword>
<keyword id="KW-0805">Transcription regulation</keyword>
<keyword id="KW-0862">Zinc</keyword>
<keyword id="KW-0863">Zinc-finger</keyword>
<name>IDD12_ARATH</name>
<dbReference type="EMBL" id="AC002330">
    <property type="protein sequence ID" value="AAC78253.1"/>
    <property type="molecule type" value="Genomic_DNA"/>
</dbReference>
<dbReference type="EMBL" id="AL161495">
    <property type="protein sequence ID" value="CAB77752.1"/>
    <property type="molecule type" value="Genomic_DNA"/>
</dbReference>
<dbReference type="EMBL" id="CP002687">
    <property type="protein sequence ID" value="AEE82212.1"/>
    <property type="molecule type" value="Genomic_DNA"/>
</dbReference>
<dbReference type="EMBL" id="AB493672">
    <property type="protein sequence ID" value="BAH30510.1"/>
    <property type="molecule type" value="mRNA"/>
</dbReference>
<dbReference type="PIR" id="T01082">
    <property type="entry name" value="T01082"/>
</dbReference>
<dbReference type="RefSeq" id="NP_192176.1">
    <property type="nucleotide sequence ID" value="NM_116501.2"/>
</dbReference>
<dbReference type="IntAct" id="O22759">
    <property type="interactions" value="8"/>
</dbReference>
<dbReference type="STRING" id="3702.O22759"/>
<dbReference type="PaxDb" id="3702-AT4G02670.1"/>
<dbReference type="ProteomicsDB" id="228777"/>
<dbReference type="EnsemblPlants" id="AT4G02670.1">
    <property type="protein sequence ID" value="AT4G02670.1"/>
    <property type="gene ID" value="AT4G02670"/>
</dbReference>
<dbReference type="GeneID" id="828206"/>
<dbReference type="Gramene" id="AT4G02670.1">
    <property type="protein sequence ID" value="AT4G02670.1"/>
    <property type="gene ID" value="AT4G02670"/>
</dbReference>
<dbReference type="KEGG" id="ath:AT4G02670"/>
<dbReference type="Araport" id="AT4G02670"/>
<dbReference type="TAIR" id="AT4G02670">
    <property type="gene designation" value="IDD12"/>
</dbReference>
<dbReference type="eggNOG" id="KOG1721">
    <property type="taxonomic scope" value="Eukaryota"/>
</dbReference>
<dbReference type="HOGENOM" id="CLU_014578_4_2_1"/>
<dbReference type="InParanoid" id="O22759"/>
<dbReference type="PhylomeDB" id="O22759"/>
<dbReference type="PRO" id="PR:O22759"/>
<dbReference type="Proteomes" id="UP000006548">
    <property type="component" value="Chromosome 4"/>
</dbReference>
<dbReference type="ExpressionAtlas" id="O22759">
    <property type="expression patterns" value="baseline and differential"/>
</dbReference>
<dbReference type="GO" id="GO:0005634">
    <property type="term" value="C:nucleus"/>
    <property type="evidence" value="ECO:0007669"/>
    <property type="project" value="UniProtKB-SubCell"/>
</dbReference>
<dbReference type="GO" id="GO:0003677">
    <property type="term" value="F:DNA binding"/>
    <property type="evidence" value="ECO:0007669"/>
    <property type="project" value="UniProtKB-KW"/>
</dbReference>
<dbReference type="GO" id="GO:0003700">
    <property type="term" value="F:DNA-binding transcription factor activity"/>
    <property type="evidence" value="ECO:0000250"/>
    <property type="project" value="TAIR"/>
</dbReference>
<dbReference type="GO" id="GO:0008270">
    <property type="term" value="F:zinc ion binding"/>
    <property type="evidence" value="ECO:0007669"/>
    <property type="project" value="UniProtKB-KW"/>
</dbReference>
<dbReference type="GO" id="GO:0006355">
    <property type="term" value="P:regulation of DNA-templated transcription"/>
    <property type="evidence" value="ECO:0000304"/>
    <property type="project" value="TAIR"/>
</dbReference>
<dbReference type="FunFam" id="3.30.160.60:FF:000554">
    <property type="entry name" value="protein indeterminate-domain 12-like"/>
    <property type="match status" value="1"/>
</dbReference>
<dbReference type="FunFam" id="3.30.160.60:FF:000131">
    <property type="entry name" value="protein indeterminate-domain 5, chloroplastic-like"/>
    <property type="match status" value="1"/>
</dbReference>
<dbReference type="Gene3D" id="3.30.160.60">
    <property type="entry name" value="Classic Zinc Finger"/>
    <property type="match status" value="2"/>
</dbReference>
<dbReference type="InterPro" id="IPR055187">
    <property type="entry name" value="C2CH-3rd_BIRD-IDD"/>
</dbReference>
<dbReference type="InterPro" id="IPR055185">
    <property type="entry name" value="C2CH-4th_BIRD-IDD"/>
</dbReference>
<dbReference type="InterPro" id="IPR055186">
    <property type="entry name" value="C2H2-2nd_BIRD-IDD"/>
</dbReference>
<dbReference type="InterPro" id="IPR031140">
    <property type="entry name" value="IDD1-16"/>
</dbReference>
<dbReference type="InterPro" id="IPR036236">
    <property type="entry name" value="Znf_C2H2_sf"/>
</dbReference>
<dbReference type="InterPro" id="IPR013087">
    <property type="entry name" value="Znf_C2H2_type"/>
</dbReference>
<dbReference type="PANTHER" id="PTHR10593:SF136">
    <property type="entry name" value="PROTEIN INDETERMINATE-DOMAIN 12"/>
    <property type="match status" value="1"/>
</dbReference>
<dbReference type="PANTHER" id="PTHR10593">
    <property type="entry name" value="SERINE/THREONINE-PROTEIN KINASE RIO"/>
    <property type="match status" value="1"/>
</dbReference>
<dbReference type="Pfam" id="PF22995">
    <property type="entry name" value="C2CH-3rd_BIRD-IDD"/>
    <property type="match status" value="1"/>
</dbReference>
<dbReference type="Pfam" id="PF22992">
    <property type="entry name" value="C2CH-4th_BIRD-IDD"/>
    <property type="match status" value="1"/>
</dbReference>
<dbReference type="Pfam" id="PF22996">
    <property type="entry name" value="C2H2-2nd_BIRD-IDD"/>
    <property type="match status" value="1"/>
</dbReference>
<dbReference type="SMART" id="SM00355">
    <property type="entry name" value="ZnF_C2H2"/>
    <property type="match status" value="3"/>
</dbReference>
<dbReference type="SUPFAM" id="SSF57667">
    <property type="entry name" value="beta-beta-alpha zinc fingers"/>
    <property type="match status" value="1"/>
</dbReference>
<dbReference type="PROSITE" id="PS00028">
    <property type="entry name" value="ZINC_FINGER_C2H2_1"/>
    <property type="match status" value="1"/>
</dbReference>
<dbReference type="PROSITE" id="PS50157">
    <property type="entry name" value="ZINC_FINGER_C2H2_2"/>
    <property type="match status" value="1"/>
</dbReference>
<sequence length="402" mass="44513">MFSSHSLSYKLSSLSTEASASSGNNTLSTIQEFSGFHNVISSVCTHTETHKPKKKRGLPGNPDPDAEVIALSPKTLLATNRFVCEICNKGFQRDQNLQLHRRGHNLPWKLKQKNTKEQQKKKVYVCPETNCAHHHPSRALGDLTGIKKHFCRKHGEKKWKCEKCSKFYAVQSDWKAHTKICGTRDYRCDCGTLFSRKDTFITHRAFCDALAEESARLHSTSSSNLTNPNPNFQGHHFMFNKSSSLLFTSSPLFIEPSLSTAALSTPPTAALSATALLQKATSLSSTTFGGGGQTRSIGHHRHLTNVNEFLGVDRVMMTSASSSEYDQLVVDGFTSTWQKADRLTRDFLGLTGHGGHVSVRPGDMLEYAGGVAFPMSAYDTESHDHSFQKAYDHLGFSGAHRM</sequence>
<organism>
    <name type="scientific">Arabidopsis thaliana</name>
    <name type="common">Mouse-ear cress</name>
    <dbReference type="NCBI Taxonomy" id="3702"/>
    <lineage>
        <taxon>Eukaryota</taxon>
        <taxon>Viridiplantae</taxon>
        <taxon>Streptophyta</taxon>
        <taxon>Embryophyta</taxon>
        <taxon>Tracheophyta</taxon>
        <taxon>Spermatophyta</taxon>
        <taxon>Magnoliopsida</taxon>
        <taxon>eudicotyledons</taxon>
        <taxon>Gunneridae</taxon>
        <taxon>Pentapetalae</taxon>
        <taxon>rosids</taxon>
        <taxon>malvids</taxon>
        <taxon>Brassicales</taxon>
        <taxon>Brassicaceae</taxon>
        <taxon>Camelineae</taxon>
        <taxon>Arabidopsis</taxon>
    </lineage>
</organism>
<gene>
    <name evidence="6" type="primary">IDD12</name>
    <name evidence="8" type="ordered locus">At4g02670</name>
    <name evidence="9" type="ORF">T10P11.4</name>
</gene>
<accession>O22759</accession>
<feature type="chain" id="PRO_0000431546" description="Protein indeterminate-domain 12">
    <location>
        <begin position="1"/>
        <end position="402"/>
    </location>
</feature>
<feature type="zinc finger region" description="C2H2-type 1" evidence="3">
    <location>
        <begin position="82"/>
        <end position="104"/>
    </location>
</feature>
<feature type="zinc finger region" description="C2H2-type 2" evidence="7">
    <location>
        <begin position="124"/>
        <end position="154"/>
    </location>
</feature>
<feature type="zinc finger region" description="C2H2-type 2; degenerate" evidence="3">
    <location>
        <begin position="159"/>
        <end position="183"/>
    </location>
</feature>
<feature type="zinc finger region" description="CCHC-type 2; atypical" evidence="7">
    <location>
        <begin position="186"/>
        <end position="209"/>
    </location>
</feature>
<feature type="region of interest" description="Disordered" evidence="5">
    <location>
        <begin position="47"/>
        <end position="66"/>
    </location>
</feature>
<feature type="region of interest" description="SHR-binding" evidence="1">
    <location>
        <begin position="196"/>
        <end position="208"/>
    </location>
</feature>
<feature type="short sequence motif" description="Nuclear localization signal" evidence="4">
    <location>
        <begin position="146"/>
        <end position="153"/>
    </location>
</feature>
<feature type="binding site" evidence="1">
    <location>
        <position position="161"/>
    </location>
    <ligand>
        <name>Zn(2+)</name>
        <dbReference type="ChEBI" id="CHEBI:29105"/>
        <label>1</label>
    </ligand>
</feature>
<feature type="binding site" evidence="1">
    <location>
        <position position="164"/>
    </location>
    <ligand>
        <name>Zn(2+)</name>
        <dbReference type="ChEBI" id="CHEBI:29105"/>
        <label>1</label>
    </ligand>
</feature>
<feature type="binding site" evidence="1">
    <location>
        <position position="177"/>
    </location>
    <ligand>
        <name>Zn(2+)</name>
        <dbReference type="ChEBI" id="CHEBI:29105"/>
        <label>1</label>
    </ligand>
</feature>
<feature type="binding site" evidence="1">
    <location>
        <position position="181"/>
    </location>
    <ligand>
        <name>Zn(2+)</name>
        <dbReference type="ChEBI" id="CHEBI:29105"/>
        <label>1</label>
    </ligand>
</feature>
<feature type="binding site" evidence="1">
    <location>
        <position position="188"/>
    </location>
    <ligand>
        <name>Zn(2+)</name>
        <dbReference type="ChEBI" id="CHEBI:29105"/>
        <label>2</label>
    </ligand>
</feature>
<feature type="binding site" evidence="1">
    <location>
        <position position="190"/>
    </location>
    <ligand>
        <name>Zn(2+)</name>
        <dbReference type="ChEBI" id="CHEBI:29105"/>
        <label>2</label>
    </ligand>
</feature>
<feature type="binding site" evidence="1">
    <location>
        <position position="203"/>
    </location>
    <ligand>
        <name>Zn(2+)</name>
        <dbReference type="ChEBI" id="CHEBI:29105"/>
        <label>2</label>
    </ligand>
</feature>
<feature type="binding site" evidence="1">
    <location>
        <position position="207"/>
    </location>
    <ligand>
        <name>Zn(2+)</name>
        <dbReference type="ChEBI" id="CHEBI:29105"/>
        <label>2</label>
    </ligand>
</feature>
<feature type="modified residue" description="Phosphoserine" evidence="2">
    <location>
        <position position="72"/>
    </location>
</feature>
<protein>
    <recommendedName>
        <fullName evidence="6">Protein indeterminate-domain 12</fullName>
    </recommendedName>
</protein>
<proteinExistence type="evidence at transcript level"/>
<evidence type="ECO:0000250" key="1">
    <source>
        <dbReference type="UniProtKB" id="Q700D2"/>
    </source>
</evidence>
<evidence type="ECO:0000250" key="2">
    <source>
        <dbReference type="UniProtKB" id="Q8GYC1"/>
    </source>
</evidence>
<evidence type="ECO:0000255" key="3">
    <source>
        <dbReference type="PROSITE-ProRule" id="PRU00042"/>
    </source>
</evidence>
<evidence type="ECO:0000255" key="4">
    <source>
        <dbReference type="PROSITE-ProRule" id="PRU00768"/>
    </source>
</evidence>
<evidence type="ECO:0000256" key="5">
    <source>
        <dbReference type="SAM" id="MobiDB-lite"/>
    </source>
</evidence>
<evidence type="ECO:0000303" key="6">
    <source>
    </source>
</evidence>
<evidence type="ECO:0000305" key="7"/>
<evidence type="ECO:0000312" key="8">
    <source>
        <dbReference type="Araport" id="AT4G02670"/>
    </source>
</evidence>
<evidence type="ECO:0000312" key="9">
    <source>
        <dbReference type="EMBL" id="AAC78253.1"/>
    </source>
</evidence>
<comment type="function">
    <text evidence="7">Probable transcription factor.</text>
</comment>
<comment type="subcellular location">
    <subcellularLocation>
        <location evidence="4">Nucleus</location>
    </subcellularLocation>
</comment>
<reference key="1">
    <citation type="journal article" date="1999" name="Nature">
        <title>Sequence and analysis of chromosome 4 of the plant Arabidopsis thaliana.</title>
        <authorList>
            <person name="Mayer K.F.X."/>
            <person name="Schueller C."/>
            <person name="Wambutt R."/>
            <person name="Murphy G."/>
            <person name="Volckaert G."/>
            <person name="Pohl T."/>
            <person name="Duesterhoeft A."/>
            <person name="Stiekema W."/>
            <person name="Entian K.-D."/>
            <person name="Terryn N."/>
            <person name="Harris B."/>
            <person name="Ansorge W."/>
            <person name="Brandt P."/>
            <person name="Grivell L.A."/>
            <person name="Rieger M."/>
            <person name="Weichselgartner M."/>
            <person name="de Simone V."/>
            <person name="Obermaier B."/>
            <person name="Mache R."/>
            <person name="Mueller M."/>
            <person name="Kreis M."/>
            <person name="Delseny M."/>
            <person name="Puigdomenech P."/>
            <person name="Watson M."/>
            <person name="Schmidtheini T."/>
            <person name="Reichert B."/>
            <person name="Portetelle D."/>
            <person name="Perez-Alonso M."/>
            <person name="Boutry M."/>
            <person name="Bancroft I."/>
            <person name="Vos P."/>
            <person name="Hoheisel J."/>
            <person name="Zimmermann W."/>
            <person name="Wedler H."/>
            <person name="Ridley P."/>
            <person name="Langham S.-A."/>
            <person name="McCullagh B."/>
            <person name="Bilham L."/>
            <person name="Robben J."/>
            <person name="van der Schueren J."/>
            <person name="Grymonprez B."/>
            <person name="Chuang Y.-J."/>
            <person name="Vandenbussche F."/>
            <person name="Braeken M."/>
            <person name="Weltjens I."/>
            <person name="Voet M."/>
            <person name="Bastiaens I."/>
            <person name="Aert R."/>
            <person name="Defoor E."/>
            <person name="Weitzenegger T."/>
            <person name="Bothe G."/>
            <person name="Ramsperger U."/>
            <person name="Hilbert H."/>
            <person name="Braun M."/>
            <person name="Holzer E."/>
            <person name="Brandt A."/>
            <person name="Peters S."/>
            <person name="van Staveren M."/>
            <person name="Dirkse W."/>
            <person name="Mooijman P."/>
            <person name="Klein Lankhorst R."/>
            <person name="Rose M."/>
            <person name="Hauf J."/>
            <person name="Koetter P."/>
            <person name="Berneiser S."/>
            <person name="Hempel S."/>
            <person name="Feldpausch M."/>
            <person name="Lamberth S."/>
            <person name="Van den Daele H."/>
            <person name="De Keyser A."/>
            <person name="Buysshaert C."/>
            <person name="Gielen J."/>
            <person name="Villarroel R."/>
            <person name="De Clercq R."/>
            <person name="van Montagu M."/>
            <person name="Rogers J."/>
            <person name="Cronin A."/>
            <person name="Quail M.A."/>
            <person name="Bray-Allen S."/>
            <person name="Clark L."/>
            <person name="Doggett J."/>
            <person name="Hall S."/>
            <person name="Kay M."/>
            <person name="Lennard N."/>
            <person name="McLay K."/>
            <person name="Mayes R."/>
            <person name="Pettett A."/>
            <person name="Rajandream M.A."/>
            <person name="Lyne M."/>
            <person name="Benes V."/>
            <person name="Rechmann S."/>
            <person name="Borkova D."/>
            <person name="Bloecker H."/>
            <person name="Scharfe M."/>
            <person name="Grimm M."/>
            <person name="Loehnert T.-H."/>
            <person name="Dose S."/>
            <person name="de Haan M."/>
            <person name="Maarse A.C."/>
            <person name="Schaefer M."/>
            <person name="Mueller-Auer S."/>
            <person name="Gabel C."/>
            <person name="Fuchs M."/>
            <person name="Fartmann B."/>
            <person name="Granderath K."/>
            <person name="Dauner D."/>
            <person name="Herzl A."/>
            <person name="Neumann S."/>
            <person name="Argiriou A."/>
            <person name="Vitale D."/>
            <person name="Liguori R."/>
            <person name="Piravandi E."/>
            <person name="Massenet O."/>
            <person name="Quigley F."/>
            <person name="Clabauld G."/>
            <person name="Muendlein A."/>
            <person name="Felber R."/>
            <person name="Schnabl S."/>
            <person name="Hiller R."/>
            <person name="Schmidt W."/>
            <person name="Lecharny A."/>
            <person name="Aubourg S."/>
            <person name="Chefdor F."/>
            <person name="Cooke R."/>
            <person name="Berger C."/>
            <person name="Monfort A."/>
            <person name="Casacuberta E."/>
            <person name="Gibbons T."/>
            <person name="Weber N."/>
            <person name="Vandenbol M."/>
            <person name="Bargues M."/>
            <person name="Terol J."/>
            <person name="Torres A."/>
            <person name="Perez-Perez A."/>
            <person name="Purnelle B."/>
            <person name="Bent E."/>
            <person name="Johnson S."/>
            <person name="Tacon D."/>
            <person name="Jesse T."/>
            <person name="Heijnen L."/>
            <person name="Schwarz S."/>
            <person name="Scholler P."/>
            <person name="Heber S."/>
            <person name="Francs P."/>
            <person name="Bielke C."/>
            <person name="Frishman D."/>
            <person name="Haase D."/>
            <person name="Lemcke K."/>
            <person name="Mewes H.-W."/>
            <person name="Stocker S."/>
            <person name="Zaccaria P."/>
            <person name="Bevan M."/>
            <person name="Wilson R.K."/>
            <person name="de la Bastide M."/>
            <person name="Habermann K."/>
            <person name="Parnell L."/>
            <person name="Dedhia N."/>
            <person name="Gnoj L."/>
            <person name="Schutz K."/>
            <person name="Huang E."/>
            <person name="Spiegel L."/>
            <person name="Sekhon M."/>
            <person name="Murray J."/>
            <person name="Sheet P."/>
            <person name="Cordes M."/>
            <person name="Abu-Threideh J."/>
            <person name="Stoneking T."/>
            <person name="Kalicki J."/>
            <person name="Graves T."/>
            <person name="Harmon G."/>
            <person name="Edwards J."/>
            <person name="Latreille P."/>
            <person name="Courtney L."/>
            <person name="Cloud J."/>
            <person name="Abbott A."/>
            <person name="Scott K."/>
            <person name="Johnson D."/>
            <person name="Minx P."/>
            <person name="Bentley D."/>
            <person name="Fulton B."/>
            <person name="Miller N."/>
            <person name="Greco T."/>
            <person name="Kemp K."/>
            <person name="Kramer J."/>
            <person name="Fulton L."/>
            <person name="Mardis E."/>
            <person name="Dante M."/>
            <person name="Pepin K."/>
            <person name="Hillier L.W."/>
            <person name="Nelson J."/>
            <person name="Spieth J."/>
            <person name="Ryan E."/>
            <person name="Andrews S."/>
            <person name="Geisel C."/>
            <person name="Layman D."/>
            <person name="Du H."/>
            <person name="Ali J."/>
            <person name="Berghoff A."/>
            <person name="Jones K."/>
            <person name="Drone K."/>
            <person name="Cotton M."/>
            <person name="Joshu C."/>
            <person name="Antonoiu B."/>
            <person name="Zidanic M."/>
            <person name="Strong C."/>
            <person name="Sun H."/>
            <person name="Lamar B."/>
            <person name="Yordan C."/>
            <person name="Ma P."/>
            <person name="Zhong J."/>
            <person name="Preston R."/>
            <person name="Vil D."/>
            <person name="Shekher M."/>
            <person name="Matero A."/>
            <person name="Shah R."/>
            <person name="Swaby I.K."/>
            <person name="O'Shaughnessy A."/>
            <person name="Rodriguez M."/>
            <person name="Hoffman J."/>
            <person name="Till S."/>
            <person name="Granat S."/>
            <person name="Shohdy N."/>
            <person name="Hasegawa A."/>
            <person name="Hameed A."/>
            <person name="Lodhi M."/>
            <person name="Johnson A."/>
            <person name="Chen E."/>
            <person name="Marra M.A."/>
            <person name="Martienssen R."/>
            <person name="McCombie W.R."/>
        </authorList>
    </citation>
    <scope>NUCLEOTIDE SEQUENCE [LARGE SCALE GENOMIC DNA]</scope>
    <source>
        <strain>cv. Columbia</strain>
    </source>
</reference>
<reference key="2">
    <citation type="journal article" date="2017" name="Plant J.">
        <title>Araport11: a complete reannotation of the Arabidopsis thaliana reference genome.</title>
        <authorList>
            <person name="Cheng C.Y."/>
            <person name="Krishnakumar V."/>
            <person name="Chan A.P."/>
            <person name="Thibaud-Nissen F."/>
            <person name="Schobel S."/>
            <person name="Town C.D."/>
        </authorList>
    </citation>
    <scope>GENOME REANNOTATION</scope>
    <source>
        <strain>cv. Columbia</strain>
    </source>
</reference>
<reference key="3">
    <citation type="submission" date="2009-03" db="EMBL/GenBank/DDBJ databases">
        <title>ORF cloning and analysis of Arabidopsis transcription factor genes.</title>
        <authorList>
            <person name="Fujita M."/>
            <person name="Mizukado S."/>
            <person name="Seki M."/>
            <person name="Shinozaki K."/>
            <person name="Mitsuda N."/>
            <person name="Takiguchi Y."/>
            <person name="Takagi M."/>
        </authorList>
    </citation>
    <scope>NUCLEOTIDE SEQUENCE [MRNA]</scope>
</reference>
<reference key="4">
    <citation type="journal article" date="2006" name="BMC Genomics">
        <title>The maize INDETERMINATE1 flowering time regulator defines a highly conserved zinc finger protein family in higher plants.</title>
        <authorList>
            <person name="Colasanti J."/>
            <person name="Tremblay R."/>
            <person name="Wong A.Y."/>
            <person name="Coneva V."/>
            <person name="Kozaki A."/>
            <person name="Mable B.K."/>
        </authorList>
    </citation>
    <scope>GENE FAMILY</scope>
    <scope>NOMENCLATURE</scope>
</reference>